<organism>
    <name type="scientific">Escherichia coli O127:H6 (strain E2348/69 / EPEC)</name>
    <dbReference type="NCBI Taxonomy" id="574521"/>
    <lineage>
        <taxon>Bacteria</taxon>
        <taxon>Pseudomonadati</taxon>
        <taxon>Pseudomonadota</taxon>
        <taxon>Gammaproteobacteria</taxon>
        <taxon>Enterobacterales</taxon>
        <taxon>Enterobacteriaceae</taxon>
        <taxon>Escherichia</taxon>
    </lineage>
</organism>
<name>NUDL_ECO27</name>
<proteinExistence type="inferred from homology"/>
<reference key="1">
    <citation type="journal article" date="2009" name="J. Bacteriol.">
        <title>Complete genome sequence and comparative genome analysis of enteropathogenic Escherichia coli O127:H6 strain E2348/69.</title>
        <authorList>
            <person name="Iguchi A."/>
            <person name="Thomson N.R."/>
            <person name="Ogura Y."/>
            <person name="Saunders D."/>
            <person name="Ooka T."/>
            <person name="Henderson I.R."/>
            <person name="Harris D."/>
            <person name="Asadulghani M."/>
            <person name="Kurokawa K."/>
            <person name="Dean P."/>
            <person name="Kenny B."/>
            <person name="Quail M.A."/>
            <person name="Thurston S."/>
            <person name="Dougan G."/>
            <person name="Hayashi T."/>
            <person name="Parkhill J."/>
            <person name="Frankel G."/>
        </authorList>
    </citation>
    <scope>NUCLEOTIDE SEQUENCE [LARGE SCALE GENOMIC DNA]</scope>
    <source>
        <strain>E2348/69 / EPEC</strain>
    </source>
</reference>
<accession>B7USI8</accession>
<keyword id="KW-0378">Hydrolase</keyword>
<keyword id="KW-0460">Magnesium</keyword>
<keyword id="KW-0464">Manganese</keyword>
<keyword id="KW-0479">Metal-binding</keyword>
<keyword id="KW-1185">Reference proteome</keyword>
<gene>
    <name evidence="1" type="primary">nudL</name>
    <name type="ordered locus">E2348C_1936</name>
</gene>
<comment type="function">
    <text evidence="1">Probably mediates the hydrolysis of some nucleoside diphosphate derivatives.</text>
</comment>
<comment type="cofactor">
    <cofactor evidence="1">
        <name>Mn(2+)</name>
        <dbReference type="ChEBI" id="CHEBI:29035"/>
    </cofactor>
    <cofactor evidence="1">
        <name>Mg(2+)</name>
        <dbReference type="ChEBI" id="CHEBI:18420"/>
    </cofactor>
</comment>
<comment type="similarity">
    <text evidence="1">Belongs to the Nudix hydrolase family. PCD1 subfamily.</text>
</comment>
<protein>
    <recommendedName>
        <fullName evidence="1">Uncharacterized Nudix hydrolase NudL</fullName>
        <ecNumber evidence="1">3.6.1.-</ecNumber>
    </recommendedName>
</protein>
<evidence type="ECO:0000255" key="1">
    <source>
        <dbReference type="HAMAP-Rule" id="MF_01592"/>
    </source>
</evidence>
<sequence length="192" mass="21464">MEYRSLTLDDFLSRFQLLRPQINRETLNHRQAAVLIPIVRRPQPGLLLTQRSIHLRKHAGQVAFPGGAVDDTDASVIAAALREAEEEVAIPPSAVEVIGVLPPVDSVTGYQVTPVVGIIPPDLPYRASEDEVSAVFEMPLAQALHLGRYHPLDIYRRGDSHRVWLSWYEQYFVWGMTAGIIRELALQIGVKP</sequence>
<dbReference type="EC" id="3.6.1.-" evidence="1"/>
<dbReference type="EMBL" id="FM180568">
    <property type="protein sequence ID" value="CAS09484.1"/>
    <property type="molecule type" value="Genomic_DNA"/>
</dbReference>
<dbReference type="RefSeq" id="WP_000456725.1">
    <property type="nucleotide sequence ID" value="NC_011601.1"/>
</dbReference>
<dbReference type="SMR" id="B7USI8"/>
<dbReference type="KEGG" id="ecg:E2348C_1936"/>
<dbReference type="HOGENOM" id="CLU_040940_5_2_6"/>
<dbReference type="Proteomes" id="UP000008205">
    <property type="component" value="Chromosome"/>
</dbReference>
<dbReference type="GO" id="GO:0010945">
    <property type="term" value="F:coenzyme A diphosphatase activity"/>
    <property type="evidence" value="ECO:0007669"/>
    <property type="project" value="InterPro"/>
</dbReference>
<dbReference type="GO" id="GO:0000287">
    <property type="term" value="F:magnesium ion binding"/>
    <property type="evidence" value="ECO:0007669"/>
    <property type="project" value="UniProtKB-UniRule"/>
</dbReference>
<dbReference type="GO" id="GO:0030145">
    <property type="term" value="F:manganese ion binding"/>
    <property type="evidence" value="ECO:0007669"/>
    <property type="project" value="UniProtKB-UniRule"/>
</dbReference>
<dbReference type="GO" id="GO:0009132">
    <property type="term" value="P:nucleoside diphosphate metabolic process"/>
    <property type="evidence" value="ECO:0007669"/>
    <property type="project" value="InterPro"/>
</dbReference>
<dbReference type="CDD" id="cd03426">
    <property type="entry name" value="NUDIX_CoAse_Nudt7"/>
    <property type="match status" value="1"/>
</dbReference>
<dbReference type="FunFam" id="3.90.79.10:FF:000013">
    <property type="entry name" value="Uncharacterized Nudix hydrolase NudL"/>
    <property type="match status" value="1"/>
</dbReference>
<dbReference type="Gene3D" id="3.90.79.10">
    <property type="entry name" value="Nucleoside Triphosphate Pyrophosphohydrolase"/>
    <property type="match status" value="1"/>
</dbReference>
<dbReference type="HAMAP" id="MF_01592">
    <property type="entry name" value="Nudix_NudL"/>
    <property type="match status" value="1"/>
</dbReference>
<dbReference type="InterPro" id="IPR045121">
    <property type="entry name" value="CoAse"/>
</dbReference>
<dbReference type="InterPro" id="IPR015797">
    <property type="entry name" value="NUDIX_hydrolase-like_dom_sf"/>
</dbReference>
<dbReference type="InterPro" id="IPR000086">
    <property type="entry name" value="NUDIX_hydrolase_dom"/>
</dbReference>
<dbReference type="InterPro" id="IPR000059">
    <property type="entry name" value="NUDIX_hydrolase_NudL_CS"/>
</dbReference>
<dbReference type="InterPro" id="IPR023735">
    <property type="entry name" value="Nudix_NudL"/>
</dbReference>
<dbReference type="NCBIfam" id="NF007980">
    <property type="entry name" value="PRK10707.1"/>
    <property type="match status" value="1"/>
</dbReference>
<dbReference type="PANTHER" id="PTHR12992:SF11">
    <property type="entry name" value="MITOCHONDRIAL COENZYME A DIPHOSPHATASE NUDT8"/>
    <property type="match status" value="1"/>
</dbReference>
<dbReference type="PANTHER" id="PTHR12992">
    <property type="entry name" value="NUDIX HYDROLASE"/>
    <property type="match status" value="1"/>
</dbReference>
<dbReference type="Pfam" id="PF00293">
    <property type="entry name" value="NUDIX"/>
    <property type="match status" value="1"/>
</dbReference>
<dbReference type="SUPFAM" id="SSF55811">
    <property type="entry name" value="Nudix"/>
    <property type="match status" value="1"/>
</dbReference>
<dbReference type="PROSITE" id="PS51462">
    <property type="entry name" value="NUDIX"/>
    <property type="match status" value="1"/>
</dbReference>
<dbReference type="PROSITE" id="PS01293">
    <property type="entry name" value="NUDIX_COA"/>
    <property type="match status" value="1"/>
</dbReference>
<feature type="chain" id="PRO_1000185702" description="Uncharacterized Nudix hydrolase NudL">
    <location>
        <begin position="1"/>
        <end position="192"/>
    </location>
</feature>
<feature type="domain" description="Nudix hydrolase" evidence="1">
    <location>
        <begin position="29"/>
        <end position="160"/>
    </location>
</feature>
<feature type="short sequence motif" description="Nudix box">
    <location>
        <begin position="67"/>
        <end position="89"/>
    </location>
</feature>
<feature type="binding site" evidence="1">
    <location>
        <position position="83"/>
    </location>
    <ligand>
        <name>Mg(2+)</name>
        <dbReference type="ChEBI" id="CHEBI:18420"/>
    </ligand>
</feature>
<feature type="binding site" evidence="1">
    <location>
        <position position="87"/>
    </location>
    <ligand>
        <name>Mg(2+)</name>
        <dbReference type="ChEBI" id="CHEBI:18420"/>
    </ligand>
</feature>